<dbReference type="EMBL" id="U00096">
    <property type="protein sequence ID" value="AAC75166.1"/>
    <property type="molecule type" value="Genomic_DNA"/>
</dbReference>
<dbReference type="EMBL" id="AP009048">
    <property type="protein sequence ID" value="BAE76586.1"/>
    <property type="molecule type" value="Genomic_DNA"/>
</dbReference>
<dbReference type="PIR" id="H64977">
    <property type="entry name" value="H64977"/>
</dbReference>
<dbReference type="RefSeq" id="NP_416608.1">
    <property type="nucleotide sequence ID" value="NC_000913.3"/>
</dbReference>
<dbReference type="RefSeq" id="WP_000019944.1">
    <property type="nucleotide sequence ID" value="NZ_STEB01000002.1"/>
</dbReference>
<dbReference type="SMR" id="P64530"/>
<dbReference type="BioGRID" id="4261164">
    <property type="interactions" value="163"/>
</dbReference>
<dbReference type="BioGRID" id="851449">
    <property type="interactions" value="4"/>
</dbReference>
<dbReference type="FunCoup" id="P64530">
    <property type="interactions" value="258"/>
</dbReference>
<dbReference type="IntAct" id="P64530">
    <property type="interactions" value="8"/>
</dbReference>
<dbReference type="STRING" id="511145.b2105"/>
<dbReference type="jPOST" id="P64530"/>
<dbReference type="PaxDb" id="511145-b2105"/>
<dbReference type="EnsemblBacteria" id="AAC75166">
    <property type="protein sequence ID" value="AAC75166"/>
    <property type="gene ID" value="b2105"/>
</dbReference>
<dbReference type="GeneID" id="93775089"/>
<dbReference type="GeneID" id="947114"/>
<dbReference type="KEGG" id="ecj:JW2092"/>
<dbReference type="KEGG" id="eco:b2105"/>
<dbReference type="KEGG" id="ecoc:C3026_11810"/>
<dbReference type="PATRIC" id="fig|1411691.4.peg.142"/>
<dbReference type="EchoBASE" id="EB3823"/>
<dbReference type="eggNOG" id="COG1937">
    <property type="taxonomic scope" value="Bacteria"/>
</dbReference>
<dbReference type="HOGENOM" id="CLU_130332_3_0_6"/>
<dbReference type="InParanoid" id="P64530"/>
<dbReference type="OMA" id="EHLTECI"/>
<dbReference type="OrthoDB" id="9806052at2"/>
<dbReference type="PhylomeDB" id="P64530"/>
<dbReference type="BioCyc" id="EcoCyc:G7137-MONOMER"/>
<dbReference type="PRO" id="PR:P64530"/>
<dbReference type="Proteomes" id="UP000000625">
    <property type="component" value="Chromosome"/>
</dbReference>
<dbReference type="GO" id="GO:0005737">
    <property type="term" value="C:cytoplasm"/>
    <property type="evidence" value="ECO:0007669"/>
    <property type="project" value="UniProtKB-SubCell"/>
</dbReference>
<dbReference type="GO" id="GO:0032993">
    <property type="term" value="C:protein-DNA complex"/>
    <property type="evidence" value="ECO:0000318"/>
    <property type="project" value="GO_Central"/>
</dbReference>
<dbReference type="GO" id="GO:0001217">
    <property type="term" value="F:DNA-binding transcription repressor activity"/>
    <property type="evidence" value="ECO:0000318"/>
    <property type="project" value="GO_Central"/>
</dbReference>
<dbReference type="GO" id="GO:0046872">
    <property type="term" value="F:metal ion binding"/>
    <property type="evidence" value="ECO:0007669"/>
    <property type="project" value="InterPro"/>
</dbReference>
<dbReference type="GO" id="GO:0000976">
    <property type="term" value="F:transcription cis-regulatory region binding"/>
    <property type="evidence" value="ECO:0000318"/>
    <property type="project" value="GO_Central"/>
</dbReference>
<dbReference type="GO" id="GO:0045892">
    <property type="term" value="P:negative regulation of DNA-templated transcription"/>
    <property type="evidence" value="ECO:0000314"/>
    <property type="project" value="EcoCyc"/>
</dbReference>
<dbReference type="CDD" id="cd10153">
    <property type="entry name" value="RcnR-FrmR-like_DUF156"/>
    <property type="match status" value="1"/>
</dbReference>
<dbReference type="FunFam" id="1.20.58.1000:FF:000001">
    <property type="entry name" value="Transcriptional repressor RcnR"/>
    <property type="match status" value="1"/>
</dbReference>
<dbReference type="Gene3D" id="1.20.58.1000">
    <property type="entry name" value="Metal-sensitive repressor, helix protomer"/>
    <property type="match status" value="1"/>
</dbReference>
<dbReference type="InterPro" id="IPR003735">
    <property type="entry name" value="Metal_Tscrpt_repr"/>
</dbReference>
<dbReference type="InterPro" id="IPR038390">
    <property type="entry name" value="Metal_Tscrpt_repr_sf"/>
</dbReference>
<dbReference type="NCBIfam" id="NF011613">
    <property type="entry name" value="PRK15039.1"/>
    <property type="match status" value="1"/>
</dbReference>
<dbReference type="PANTHER" id="PTHR33677">
    <property type="entry name" value="TRANSCRIPTIONAL REPRESSOR FRMR-RELATED"/>
    <property type="match status" value="1"/>
</dbReference>
<dbReference type="PANTHER" id="PTHR33677:SF1">
    <property type="entry name" value="TRANSCRIPTIONAL REPRESSOR RCNR"/>
    <property type="match status" value="1"/>
</dbReference>
<dbReference type="Pfam" id="PF02583">
    <property type="entry name" value="Trns_repr_metal"/>
    <property type="match status" value="1"/>
</dbReference>
<keyword id="KW-0963">Cytoplasm</keyword>
<keyword id="KW-0238">DNA-binding</keyword>
<keyword id="KW-1185">Reference proteome</keyword>
<keyword id="KW-0678">Repressor</keyword>
<keyword id="KW-0804">Transcription</keyword>
<keyword id="KW-0805">Transcription regulation</keyword>
<evidence type="ECO:0000269" key="1">
    <source>
    </source>
</evidence>
<evidence type="ECO:0000269" key="2">
    <source>
    </source>
</evidence>
<evidence type="ECO:0000305" key="3"/>
<protein>
    <recommendedName>
        <fullName>Transcriptional repressor RcnR</fullName>
    </recommendedName>
</protein>
<gene>
    <name type="primary">rcnR</name>
    <name type="synonym">yohL</name>
    <name type="ordered locus">b2105</name>
    <name type="ordered locus">JW2092</name>
</gene>
<name>RCNR_ECOLI</name>
<proteinExistence type="evidence at protein level"/>
<accession>P64530</accession>
<accession>P76424</accession>
<accession>Q2MAX0</accession>
<comment type="function">
    <text evidence="1 2">Repressor of rcnA expression. Acts by binding specifically to the rcnA promoter in the absence of nickel and cobalt. In the presence of one of these metals, it has a weaker affinity for rcnA promoter.</text>
</comment>
<comment type="subcellular location">
    <subcellularLocation>
        <location evidence="3">Cytoplasm</location>
    </subcellularLocation>
</comment>
<comment type="similarity">
    <text evidence="3">Belongs to the FrmR/RcnR family.</text>
</comment>
<sequence length="90" mass="10134">MSHTIRDKQKLKARASKIQGQVVALKKMLDEPHECAAVLQQIAAIRGAVNGLMREVIKGHLTEHIVHQGDELKREEDLDVVLKVLDSYIK</sequence>
<feature type="chain" id="PRO_0000169143" description="Transcriptional repressor RcnR">
    <location>
        <begin position="1"/>
        <end position="90"/>
    </location>
</feature>
<organism>
    <name type="scientific">Escherichia coli (strain K12)</name>
    <dbReference type="NCBI Taxonomy" id="83333"/>
    <lineage>
        <taxon>Bacteria</taxon>
        <taxon>Pseudomonadati</taxon>
        <taxon>Pseudomonadota</taxon>
        <taxon>Gammaproteobacteria</taxon>
        <taxon>Enterobacterales</taxon>
        <taxon>Enterobacteriaceae</taxon>
        <taxon>Escherichia</taxon>
    </lineage>
</organism>
<reference key="1">
    <citation type="journal article" date="1997" name="Science">
        <title>The complete genome sequence of Escherichia coli K-12.</title>
        <authorList>
            <person name="Blattner F.R."/>
            <person name="Plunkett G. III"/>
            <person name="Bloch C.A."/>
            <person name="Perna N.T."/>
            <person name="Burland V."/>
            <person name="Riley M."/>
            <person name="Collado-Vides J."/>
            <person name="Glasner J.D."/>
            <person name="Rode C.K."/>
            <person name="Mayhew G.F."/>
            <person name="Gregor J."/>
            <person name="Davis N.W."/>
            <person name="Kirkpatrick H.A."/>
            <person name="Goeden M.A."/>
            <person name="Rose D.J."/>
            <person name="Mau B."/>
            <person name="Shao Y."/>
        </authorList>
    </citation>
    <scope>NUCLEOTIDE SEQUENCE [LARGE SCALE GENOMIC DNA]</scope>
    <source>
        <strain>K12 / MG1655 / ATCC 47076</strain>
    </source>
</reference>
<reference key="2">
    <citation type="journal article" date="2006" name="Mol. Syst. Biol.">
        <title>Highly accurate genome sequences of Escherichia coli K-12 strains MG1655 and W3110.</title>
        <authorList>
            <person name="Hayashi K."/>
            <person name="Morooka N."/>
            <person name="Yamamoto Y."/>
            <person name="Fujita K."/>
            <person name="Isono K."/>
            <person name="Choi S."/>
            <person name="Ohtsubo E."/>
            <person name="Baba T."/>
            <person name="Wanner B.L."/>
            <person name="Mori H."/>
            <person name="Horiuchi T."/>
        </authorList>
    </citation>
    <scope>NUCLEOTIDE SEQUENCE [LARGE SCALE GENOMIC DNA]</scope>
    <source>
        <strain>K12 / W3110 / ATCC 27325 / DSM 5911</strain>
    </source>
</reference>
<reference key="3">
    <citation type="journal article" date="2006" name="Mol. Microbiol.">
        <title>Nickel homeostasis in Escherichia coli - the rcnR-rcnA efflux pathway and its linkage to NikR function.</title>
        <authorList>
            <person name="Iwig J.S."/>
            <person name="Rowe J.L."/>
            <person name="Chivers P.T."/>
        </authorList>
    </citation>
    <scope>FUNCTION</scope>
    <scope>DNA-BINDING</scope>
    <source>
        <strain>K12 / MG1655 / ATCC 47076</strain>
    </source>
</reference>
<reference key="4">
    <citation type="journal article" date="2007" name="BioMetals">
        <title>The RcnRA (YohLM) system of Escherichia coli: a connection between nickel, cobalt and iron homeostasis.</title>
        <authorList>
            <person name="Koch D."/>
            <person name="Nies D.H."/>
            <person name="Grass G."/>
        </authorList>
    </citation>
    <scope>FUNCTION</scope>
    <source>
        <strain>K12 / W3110 / ATCC 27325 / DSM 5911</strain>
    </source>
</reference>